<accession>P62368</accession>
<accession>A0A143ZWM3</accession>
<accession>O96178</accession>
<gene>
    <name evidence="4" type="primary">IspF</name>
    <name type="ORF">PF3D7_0209300</name>
    <name type="ORF">PFB0420w</name>
</gene>
<proteinExistence type="evidence at protein level"/>
<reference key="1">
    <citation type="journal article" date="1998" name="Science">
        <title>Chromosome 2 sequence of the human malaria parasite Plasmodium falciparum.</title>
        <authorList>
            <person name="Gardner M.J."/>
            <person name="Tettelin H."/>
            <person name="Carucci D.J."/>
            <person name="Cummings L.M."/>
            <person name="Aravind L."/>
            <person name="Koonin E.V."/>
            <person name="Shallom S.J."/>
            <person name="Mason T."/>
            <person name="Yu K."/>
            <person name="Fujii C."/>
            <person name="Pederson J."/>
            <person name="Shen K."/>
            <person name="Jing J."/>
            <person name="Aston C."/>
            <person name="Lai Z."/>
            <person name="Schwartz D.C."/>
            <person name="Pertea M."/>
            <person name="Salzberg S.L."/>
            <person name="Zhou L."/>
            <person name="Sutton G.G."/>
            <person name="Clayton R."/>
            <person name="White O."/>
            <person name="Smith H.O."/>
            <person name="Fraser C.M."/>
            <person name="Adams M.D."/>
            <person name="Venter J.C."/>
            <person name="Hoffman S.L."/>
        </authorList>
    </citation>
    <scope>NUCLEOTIDE SEQUENCE [LARGE SCALE GENOMIC DNA]</scope>
    <source>
        <strain>3D7</strain>
    </source>
</reference>
<reference key="2">
    <citation type="journal article" date="2002" name="Nature">
        <title>Genome sequence of the human malaria parasite Plasmodium falciparum.</title>
        <authorList>
            <person name="Gardner M.J."/>
            <person name="Hall N."/>
            <person name="Fung E."/>
            <person name="White O."/>
            <person name="Berriman M."/>
            <person name="Hyman R.W."/>
            <person name="Carlton J.M."/>
            <person name="Pain A."/>
            <person name="Nelson K.E."/>
            <person name="Bowman S."/>
            <person name="Paulsen I.T."/>
            <person name="James K.D."/>
            <person name="Eisen J.A."/>
            <person name="Rutherford K.M."/>
            <person name="Salzberg S.L."/>
            <person name="Craig A."/>
            <person name="Kyes S."/>
            <person name="Chan M.-S."/>
            <person name="Nene V."/>
            <person name="Shallom S.J."/>
            <person name="Suh B."/>
            <person name="Peterson J."/>
            <person name="Angiuoli S."/>
            <person name="Pertea M."/>
            <person name="Allen J."/>
            <person name="Selengut J."/>
            <person name="Haft D."/>
            <person name="Mather M.W."/>
            <person name="Vaidya A.B."/>
            <person name="Martin D.M.A."/>
            <person name="Fairlamb A.H."/>
            <person name="Fraunholz M.J."/>
            <person name="Roos D.S."/>
            <person name="Ralph S.A."/>
            <person name="McFadden G.I."/>
            <person name="Cummings L.M."/>
            <person name="Subramanian G.M."/>
            <person name="Mungall C."/>
            <person name="Venter J.C."/>
            <person name="Carucci D.J."/>
            <person name="Hoffman S.L."/>
            <person name="Newbold C."/>
            <person name="Davis R.W."/>
            <person name="Fraser C.M."/>
            <person name="Barrell B.G."/>
        </authorList>
    </citation>
    <scope>NUCLEOTIDE SEQUENCE [LARGE SCALE GENOMIC DNA]</scope>
    <source>
        <strain>3D7</strain>
    </source>
</reference>
<reference key="3">
    <citation type="journal article" date="2014" name="BMC Struct. Biol.">
        <title>Crystal structures of IspF from Plasmodium falciparum and Burkholderia cenocepacia: comparisons inform antimicrobial drug target assessment.</title>
        <authorList>
            <person name="O'Rourke P.E."/>
            <person name="Kalinowska-Tluscik J."/>
            <person name="Fyfe P.K."/>
            <person name="Dawson A."/>
            <person name="Hunter W.N."/>
        </authorList>
    </citation>
    <scope>X-RAY CRYSTALLOGRAPHY (1.56 ANGSTROMS) OF 60-240 IN COMPLEX WITH ZINC IONS AND CDP</scope>
    <scope>SUBUNIT</scope>
    <scope>COFACTOR</scope>
</reference>
<sequence>MFLKGYTSNVVLIILTFFILLTKEEKNIKNNISGYCFLNFGLKKNAIIKKREKQNLKLFCYNGIRIGQGYDIHKIKVLDEEYNTYANNDFNKNEQSFKTLTLGGVKINNVLVLSHSDGDIIYHSIVDSILGALGSLDIGTLFPDKDEKNKNKNSAIFLRYARLLIYKKNYDIGNVDINVIAQVPKISNIRKNIIKNISTVLNIDESQISVKGKTHEKLGVIGEKKAIECFANILLIPKNS</sequence>
<protein>
    <recommendedName>
        <fullName evidence="4">2-C-methyl-D-erythritol 2,4-cyclodiphosphate synthase, apicoplast</fullName>
        <shortName evidence="5">MECDP-synthase</shortName>
        <shortName evidence="5">MECPS</shortName>
        <ecNumber evidence="1">4.6.1.12</ecNumber>
    </recommendedName>
    <alternativeName>
        <fullName evidence="4">PfIspF</fullName>
    </alternativeName>
</protein>
<name>ISPF_PLAF7</name>
<evidence type="ECO:0000250" key="1">
    <source>
        <dbReference type="UniProtKB" id="P62369"/>
    </source>
</evidence>
<evidence type="ECO:0000250" key="2">
    <source>
        <dbReference type="UniProtKB" id="P62617"/>
    </source>
</evidence>
<evidence type="ECO:0000269" key="3">
    <source>
    </source>
</evidence>
<evidence type="ECO:0000303" key="4">
    <source>
    </source>
</evidence>
<evidence type="ECO:0000305" key="5"/>
<evidence type="ECO:0000305" key="6">
    <source>
    </source>
</evidence>
<evidence type="ECO:0007744" key="7">
    <source>
        <dbReference type="PDB" id="4C81"/>
    </source>
</evidence>
<evidence type="ECO:0007744" key="8">
    <source>
        <dbReference type="PDB" id="4C82"/>
    </source>
</evidence>
<evidence type="ECO:0007829" key="9">
    <source>
        <dbReference type="PDB" id="4C81"/>
    </source>
</evidence>
<feature type="transit peptide" description="Apicoplast" evidence="5">
    <location>
        <begin position="1"/>
        <end status="unknown"/>
    </location>
</feature>
<feature type="chain" id="PRO_0000016484" description="2-C-methyl-D-erythritol 2,4-cyclodiphosphate synthase, apicoplast">
    <location>
        <begin status="unknown"/>
        <end position="240"/>
    </location>
</feature>
<feature type="binding site" evidence="2">
    <location>
        <begin position="71"/>
        <end position="73"/>
    </location>
    <ligand>
        <name>4-CDP-2-C-methyl-D-erythritol 2-phosphate</name>
        <dbReference type="ChEBI" id="CHEBI:57919"/>
    </ligand>
</feature>
<feature type="binding site" evidence="3 7 8">
    <location>
        <position position="71"/>
    </location>
    <ligand>
        <name>a divalent metal cation</name>
        <dbReference type="ChEBI" id="CHEBI:60240"/>
    </ligand>
</feature>
<feature type="binding site" evidence="3 7 8">
    <location>
        <position position="73"/>
    </location>
    <ligand>
        <name>a divalent metal cation</name>
        <dbReference type="ChEBI" id="CHEBI:60240"/>
    </ligand>
</feature>
<feature type="binding site" evidence="2">
    <location>
        <begin position="115"/>
        <end position="116"/>
    </location>
    <ligand>
        <name>4-CDP-2-C-methyl-D-erythritol 2-phosphate</name>
        <dbReference type="ChEBI" id="CHEBI:57919"/>
    </ligand>
</feature>
<feature type="binding site" evidence="3 7 8">
    <location>
        <position position="123"/>
    </location>
    <ligand>
        <name>a divalent metal cation</name>
        <dbReference type="ChEBI" id="CHEBI:60240"/>
    </ligand>
</feature>
<feature type="binding site" evidence="3 7">
    <location>
        <begin position="137"/>
        <end position="139"/>
    </location>
    <ligand>
        <name>4-CDP-2-C-methyl-D-erythritol 2-phosphate</name>
        <dbReference type="ChEBI" id="CHEBI:57919"/>
    </ligand>
</feature>
<feature type="binding site" evidence="2">
    <location>
        <begin position="142"/>
        <end position="146"/>
    </location>
    <ligand>
        <name>4-CDP-2-C-methyl-D-erythritol 2-phosphate</name>
        <dbReference type="ChEBI" id="CHEBI:57919"/>
    </ligand>
</feature>
<feature type="binding site" evidence="3 7">
    <location>
        <begin position="181"/>
        <end position="187"/>
    </location>
    <ligand>
        <name>4-CDP-2-C-methyl-D-erythritol 2-phosphate</name>
        <dbReference type="ChEBI" id="CHEBI:57919"/>
    </ligand>
</feature>
<feature type="binding site" evidence="3 7">
    <location>
        <begin position="212"/>
        <end position="214"/>
    </location>
    <ligand>
        <name>4-CDP-2-C-methyl-D-erythritol 2-phosphate</name>
        <dbReference type="ChEBI" id="CHEBI:57919"/>
    </ligand>
</feature>
<feature type="site" description="Transition state stabilizer" evidence="2">
    <location>
        <position position="115"/>
    </location>
</feature>
<feature type="site" description="Transition state stabilizer" evidence="2">
    <location>
        <position position="214"/>
    </location>
</feature>
<feature type="strand" evidence="9">
    <location>
        <begin position="65"/>
        <end position="77"/>
    </location>
</feature>
<feature type="strand" evidence="9">
    <location>
        <begin position="99"/>
        <end position="102"/>
    </location>
</feature>
<feature type="strand" evidence="9">
    <location>
        <begin position="105"/>
        <end position="116"/>
    </location>
</feature>
<feature type="helix" evidence="9">
    <location>
        <begin position="120"/>
        <end position="133"/>
    </location>
</feature>
<feature type="helix" evidence="9">
    <location>
        <begin position="138"/>
        <end position="141"/>
    </location>
</feature>
<feature type="helix" evidence="9">
    <location>
        <begin position="153"/>
        <end position="167"/>
    </location>
</feature>
<feature type="strand" evidence="9">
    <location>
        <begin position="170"/>
        <end position="180"/>
    </location>
</feature>
<feature type="strand" evidence="9">
    <location>
        <begin position="182"/>
        <end position="184"/>
    </location>
</feature>
<feature type="helix" evidence="9">
    <location>
        <begin position="186"/>
        <end position="201"/>
    </location>
</feature>
<feature type="helix" evidence="9">
    <location>
        <begin position="205"/>
        <end position="207"/>
    </location>
</feature>
<feature type="strand" evidence="9">
    <location>
        <begin position="208"/>
        <end position="213"/>
    </location>
</feature>
<feature type="helix" evidence="9">
    <location>
        <begin position="219"/>
        <end position="222"/>
    </location>
</feature>
<feature type="strand" evidence="9">
    <location>
        <begin position="225"/>
        <end position="237"/>
    </location>
</feature>
<organism>
    <name type="scientific">Plasmodium falciparum (isolate 3D7)</name>
    <dbReference type="NCBI Taxonomy" id="36329"/>
    <lineage>
        <taxon>Eukaryota</taxon>
        <taxon>Sar</taxon>
        <taxon>Alveolata</taxon>
        <taxon>Apicomplexa</taxon>
        <taxon>Aconoidasida</taxon>
        <taxon>Haemosporida</taxon>
        <taxon>Plasmodiidae</taxon>
        <taxon>Plasmodium</taxon>
        <taxon>Plasmodium (Laverania)</taxon>
    </lineage>
</organism>
<comment type="function">
    <text evidence="1">In the mevalonate-independent isoprenoid biosynthetic pathway, converts 4-diphosphocytidyl-2C-methyl-D-erythritol 2-phosphate into 2C-methyl-D-erythritol 2,4-cyclodiphosphate and CMP.</text>
</comment>
<comment type="catalytic activity">
    <reaction evidence="1">
        <text>4-CDP-2-C-methyl-D-erythritol 2-phosphate = 2-C-methyl-D-erythritol 2,4-cyclic diphosphate + CMP</text>
        <dbReference type="Rhea" id="RHEA:23864"/>
        <dbReference type="ChEBI" id="CHEBI:57919"/>
        <dbReference type="ChEBI" id="CHEBI:58483"/>
        <dbReference type="ChEBI" id="CHEBI:60377"/>
        <dbReference type="EC" id="4.6.1.12"/>
    </reaction>
</comment>
<comment type="cofactor">
    <cofactor evidence="3">
        <name>a divalent metal cation</name>
        <dbReference type="ChEBI" id="CHEBI:60240"/>
    </cofactor>
    <text evidence="3">Binds 1 divalent metal cation per subunit.</text>
</comment>
<comment type="pathway">
    <text evidence="1">Isoprenoid biosynthesis; isopentenyl diphosphate biosynthesis via DXP pathway; isopentenyl diphosphate from 1-deoxy-D-xylulose 5-phosphate: step 4/6.</text>
</comment>
<comment type="subunit">
    <text evidence="6">Homotrimer.</text>
</comment>
<comment type="subcellular location">
    <subcellularLocation>
        <location evidence="5">Plastid</location>
        <location evidence="5">Apicoplast</location>
    </subcellularLocation>
</comment>
<comment type="similarity">
    <text evidence="5">Belongs to the IspF family.</text>
</comment>
<dbReference type="EC" id="4.6.1.12" evidence="1"/>
<dbReference type="EMBL" id="LN999943">
    <property type="protein sequence ID" value="CZT98107.1"/>
    <property type="molecule type" value="Genomic_DNA"/>
</dbReference>
<dbReference type="PIR" id="B71615">
    <property type="entry name" value="B71615"/>
</dbReference>
<dbReference type="RefSeq" id="XP_001349603.1">
    <property type="nucleotide sequence ID" value="XM_001349567.1"/>
</dbReference>
<dbReference type="PDB" id="4C81">
    <property type="method" value="X-ray"/>
    <property type="resolution" value="1.56 A"/>
    <property type="chains" value="A=60-240"/>
</dbReference>
<dbReference type="PDB" id="4C82">
    <property type="method" value="X-ray"/>
    <property type="resolution" value="2.00 A"/>
    <property type="chains" value="A=60-240"/>
</dbReference>
<dbReference type="PDBsum" id="4C81"/>
<dbReference type="PDBsum" id="4C82"/>
<dbReference type="SMR" id="P62368"/>
<dbReference type="BioGRID" id="1208005">
    <property type="interactions" value="1"/>
</dbReference>
<dbReference type="FunCoup" id="P62368">
    <property type="interactions" value="46"/>
</dbReference>
<dbReference type="IntAct" id="P62368">
    <property type="interactions" value="1"/>
</dbReference>
<dbReference type="STRING" id="36329.P62368"/>
<dbReference type="PaxDb" id="5833-PFB0420w"/>
<dbReference type="EnsemblProtists" id="CZT98107">
    <property type="protein sequence ID" value="CZT98107"/>
    <property type="gene ID" value="PF3D7_0209300"/>
</dbReference>
<dbReference type="GeneID" id="812685"/>
<dbReference type="KEGG" id="pfa:PF3D7_0209300"/>
<dbReference type="VEuPathDB" id="PlasmoDB:PF3D7_0209300"/>
<dbReference type="HOGENOM" id="CLU_084630_2_0_1"/>
<dbReference type="InParanoid" id="P62368"/>
<dbReference type="OMA" id="LIHAIMD"/>
<dbReference type="OrthoDB" id="2015434at2759"/>
<dbReference type="PhylomeDB" id="P62368"/>
<dbReference type="BRENDA" id="4.6.1.12">
    <property type="organism ID" value="4889"/>
</dbReference>
<dbReference type="UniPathway" id="UPA00056">
    <property type="reaction ID" value="UER00095"/>
</dbReference>
<dbReference type="EvolutionaryTrace" id="P62368"/>
<dbReference type="Proteomes" id="UP000001450">
    <property type="component" value="Chromosome 2"/>
</dbReference>
<dbReference type="GO" id="GO:0020011">
    <property type="term" value="C:apicoplast"/>
    <property type="evidence" value="ECO:0000314"/>
    <property type="project" value="GeneDB"/>
</dbReference>
<dbReference type="GO" id="GO:0008685">
    <property type="term" value="F:2-C-methyl-D-erythritol 2,4-cyclodiphosphate synthase activity"/>
    <property type="evidence" value="ECO:0000318"/>
    <property type="project" value="GO_Central"/>
</dbReference>
<dbReference type="GO" id="GO:0046872">
    <property type="term" value="F:metal ion binding"/>
    <property type="evidence" value="ECO:0007669"/>
    <property type="project" value="UniProtKB-KW"/>
</dbReference>
<dbReference type="GO" id="GO:0019288">
    <property type="term" value="P:isopentenyl diphosphate biosynthetic process, methylerythritol 4-phosphate pathway"/>
    <property type="evidence" value="ECO:0007669"/>
    <property type="project" value="UniProtKB-UniPathway"/>
</dbReference>
<dbReference type="GO" id="GO:0016114">
    <property type="term" value="P:terpenoid biosynthetic process"/>
    <property type="evidence" value="ECO:0007669"/>
    <property type="project" value="InterPro"/>
</dbReference>
<dbReference type="CDD" id="cd00554">
    <property type="entry name" value="MECDP_synthase"/>
    <property type="match status" value="1"/>
</dbReference>
<dbReference type="FunFam" id="3.30.1330.50:FF:000004">
    <property type="entry name" value="2-C-methyl-D-erythritol 2,4-cyclodiphosphate synthase"/>
    <property type="match status" value="1"/>
</dbReference>
<dbReference type="Gene3D" id="3.30.1330.50">
    <property type="entry name" value="2-C-methyl-D-erythritol 2,4-cyclodiphosphate synthase"/>
    <property type="match status" value="1"/>
</dbReference>
<dbReference type="HAMAP" id="MF_00107">
    <property type="entry name" value="IspF"/>
    <property type="match status" value="1"/>
</dbReference>
<dbReference type="InterPro" id="IPR003526">
    <property type="entry name" value="MECDP_synthase"/>
</dbReference>
<dbReference type="InterPro" id="IPR020555">
    <property type="entry name" value="MECDP_synthase_CS"/>
</dbReference>
<dbReference type="InterPro" id="IPR036571">
    <property type="entry name" value="MECDP_synthase_sf"/>
</dbReference>
<dbReference type="NCBIfam" id="TIGR00151">
    <property type="entry name" value="ispF"/>
    <property type="match status" value="1"/>
</dbReference>
<dbReference type="PANTHER" id="PTHR43181">
    <property type="entry name" value="2-C-METHYL-D-ERYTHRITOL 2,4-CYCLODIPHOSPHATE SYNTHASE, CHLOROPLASTIC"/>
    <property type="match status" value="1"/>
</dbReference>
<dbReference type="PANTHER" id="PTHR43181:SF1">
    <property type="entry name" value="2-C-METHYL-D-ERYTHRITOL 2,4-CYCLODIPHOSPHATE SYNTHASE, CHLOROPLASTIC"/>
    <property type="match status" value="1"/>
</dbReference>
<dbReference type="Pfam" id="PF02542">
    <property type="entry name" value="YgbB"/>
    <property type="match status" value="1"/>
</dbReference>
<dbReference type="SUPFAM" id="SSF69765">
    <property type="entry name" value="IpsF-like"/>
    <property type="match status" value="1"/>
</dbReference>
<dbReference type="PROSITE" id="PS01350">
    <property type="entry name" value="ISPF"/>
    <property type="match status" value="1"/>
</dbReference>
<keyword id="KW-0002">3D-structure</keyword>
<keyword id="KW-0933">Apicoplast</keyword>
<keyword id="KW-0414">Isoprene biosynthesis</keyword>
<keyword id="KW-0456">Lyase</keyword>
<keyword id="KW-0479">Metal-binding</keyword>
<keyword id="KW-0934">Plastid</keyword>
<keyword id="KW-1185">Reference proteome</keyword>
<keyword id="KW-0809">Transit peptide</keyword>